<comment type="function">
    <text evidence="1">Appears to play a crucial role in the insertion of secretory and membrane polypeptides into the ER. It is required for assembly of membrane and secretory proteins and is essential for cell growth. It interacts with other membrane proteins required for protein translocation. Upon binding to sec62/63 complex, secretory precursor polypeptides may engage sec61 to begin membrane penetration event. A cycle of assembly and disassembly of sec62/63 from sec61 may govern the activity of the translocase (By similarity).</text>
</comment>
<comment type="subunit">
    <text evidence="1">Heterotrimeric complex composed of SEC61-alpha, SEC61-beta and SEC61-gamma.</text>
</comment>
<comment type="subcellular location">
    <subcellularLocation>
        <location evidence="3">Endoplasmic reticulum membrane</location>
        <topology evidence="3">Multi-pass membrane protein</topology>
    </subcellularLocation>
</comment>
<comment type="similarity">
    <text evidence="4">Belongs to the SecY/SEC61-alpha family.</text>
</comment>
<reference key="1">
    <citation type="journal article" date="1997" name="J. Cell Sci.">
        <title>Cloning of SEC61 homologues from Schizosaccharomyces pombe and Yarrowia lipolytica reveals the extent of functional conservation within this core component of the ER translocation machinery.</title>
        <authorList>
            <person name="Broughton J."/>
            <person name="Swennen D."/>
            <person name="Wilkinson B.M."/>
            <person name="Joyet P."/>
            <person name="Gaillardin C."/>
            <person name="Stirling C.J."/>
        </authorList>
    </citation>
    <scope>NUCLEOTIDE SEQUENCE [GENOMIC DNA / MRNA]</scope>
</reference>
<reference key="2">
    <citation type="journal article" date="2002" name="Nature">
        <title>The genome sequence of Schizosaccharomyces pombe.</title>
        <authorList>
            <person name="Wood V."/>
            <person name="Gwilliam R."/>
            <person name="Rajandream M.A."/>
            <person name="Lyne M.H."/>
            <person name="Lyne R."/>
            <person name="Stewart A."/>
            <person name="Sgouros J.G."/>
            <person name="Peat N."/>
            <person name="Hayles J."/>
            <person name="Baker S.G."/>
            <person name="Basham D."/>
            <person name="Bowman S."/>
            <person name="Brooks K."/>
            <person name="Brown D."/>
            <person name="Brown S."/>
            <person name="Chillingworth T."/>
            <person name="Churcher C.M."/>
            <person name="Collins M."/>
            <person name="Connor R."/>
            <person name="Cronin A."/>
            <person name="Davis P."/>
            <person name="Feltwell T."/>
            <person name="Fraser A."/>
            <person name="Gentles S."/>
            <person name="Goble A."/>
            <person name="Hamlin N."/>
            <person name="Harris D.E."/>
            <person name="Hidalgo J."/>
            <person name="Hodgson G."/>
            <person name="Holroyd S."/>
            <person name="Hornsby T."/>
            <person name="Howarth S."/>
            <person name="Huckle E.J."/>
            <person name="Hunt S."/>
            <person name="Jagels K."/>
            <person name="James K.D."/>
            <person name="Jones L."/>
            <person name="Jones M."/>
            <person name="Leather S."/>
            <person name="McDonald S."/>
            <person name="McLean J."/>
            <person name="Mooney P."/>
            <person name="Moule S."/>
            <person name="Mungall K.L."/>
            <person name="Murphy L.D."/>
            <person name="Niblett D."/>
            <person name="Odell C."/>
            <person name="Oliver K."/>
            <person name="O'Neil S."/>
            <person name="Pearson D."/>
            <person name="Quail M.A."/>
            <person name="Rabbinowitsch E."/>
            <person name="Rutherford K.M."/>
            <person name="Rutter S."/>
            <person name="Saunders D."/>
            <person name="Seeger K."/>
            <person name="Sharp S."/>
            <person name="Skelton J."/>
            <person name="Simmonds M.N."/>
            <person name="Squares R."/>
            <person name="Squares S."/>
            <person name="Stevens K."/>
            <person name="Taylor K."/>
            <person name="Taylor R.G."/>
            <person name="Tivey A."/>
            <person name="Walsh S.V."/>
            <person name="Warren T."/>
            <person name="Whitehead S."/>
            <person name="Woodward J.R."/>
            <person name="Volckaert G."/>
            <person name="Aert R."/>
            <person name="Robben J."/>
            <person name="Grymonprez B."/>
            <person name="Weltjens I."/>
            <person name="Vanstreels E."/>
            <person name="Rieger M."/>
            <person name="Schaefer M."/>
            <person name="Mueller-Auer S."/>
            <person name="Gabel C."/>
            <person name="Fuchs M."/>
            <person name="Duesterhoeft A."/>
            <person name="Fritzc C."/>
            <person name="Holzer E."/>
            <person name="Moestl D."/>
            <person name="Hilbert H."/>
            <person name="Borzym K."/>
            <person name="Langer I."/>
            <person name="Beck A."/>
            <person name="Lehrach H."/>
            <person name="Reinhardt R."/>
            <person name="Pohl T.M."/>
            <person name="Eger P."/>
            <person name="Zimmermann W."/>
            <person name="Wedler H."/>
            <person name="Wambutt R."/>
            <person name="Purnelle B."/>
            <person name="Goffeau A."/>
            <person name="Cadieu E."/>
            <person name="Dreano S."/>
            <person name="Gloux S."/>
            <person name="Lelaure V."/>
            <person name="Mottier S."/>
            <person name="Galibert F."/>
            <person name="Aves S.J."/>
            <person name="Xiang Z."/>
            <person name="Hunt C."/>
            <person name="Moore K."/>
            <person name="Hurst S.M."/>
            <person name="Lucas M."/>
            <person name="Rochet M."/>
            <person name="Gaillardin C."/>
            <person name="Tallada V.A."/>
            <person name="Garzon A."/>
            <person name="Thode G."/>
            <person name="Daga R.R."/>
            <person name="Cruzado L."/>
            <person name="Jimenez J."/>
            <person name="Sanchez M."/>
            <person name="del Rey F."/>
            <person name="Benito J."/>
            <person name="Dominguez A."/>
            <person name="Revuelta J.L."/>
            <person name="Moreno S."/>
            <person name="Armstrong J."/>
            <person name="Forsburg S.L."/>
            <person name="Cerutti L."/>
            <person name="Lowe T."/>
            <person name="McCombie W.R."/>
            <person name="Paulsen I."/>
            <person name="Potashkin J."/>
            <person name="Shpakovski G.V."/>
            <person name="Ussery D."/>
            <person name="Barrell B.G."/>
            <person name="Nurse P."/>
        </authorList>
    </citation>
    <scope>NUCLEOTIDE SEQUENCE [LARGE SCALE GENOMIC DNA]</scope>
    <source>
        <strain>972 / ATCC 24843</strain>
    </source>
</reference>
<reference key="3">
    <citation type="journal article" date="2000" name="Genes Cells">
        <title>Large-scale screening of intracellular protein localization in living fission yeast cells by the use of a GFP-fusion genomic DNA library.</title>
        <authorList>
            <person name="Ding D.-Q."/>
            <person name="Tomita Y."/>
            <person name="Yamamoto A."/>
            <person name="Chikashige Y."/>
            <person name="Haraguchi T."/>
            <person name="Hiraoka Y."/>
        </authorList>
    </citation>
    <scope>NUCLEOTIDE SEQUENCE [LARGE SCALE GENOMIC DNA] OF 121-179</scope>
    <scope>SUBCELLULAR LOCATION</scope>
    <source>
        <strain>ATCC 38364 / 968</strain>
    </source>
</reference>
<gene>
    <name type="primary">sec61</name>
    <name type="ORF">SPBC354.02c</name>
</gene>
<sequence>MSDLRFLDLVKPFAPFLPEIAAPERKVPFKQKMLWTGVTLLIFLVMSQVPLYGIVSSDSSDPLLWLRMILAANRGTLMELGISPIVTSSMLVQLLVGSQLIEVNMELKSDREMYQLVQKFLAIIIAFGQATAYVLTGMYGRPQDLGAGICLLLILQLAAASLIVLLLDELLQKGYGLGSGISLFIATINCENIFWKAFSPTTYHIANGVQFEGAVINFVYVMFTWDNKAAALYQAFFRSGLTSSQIQLPNLWNFFATLLVFGVVIYLQDFRVEIPIRSQKFRGYRSTFPVKLLYTSNTPIMLQSALTSNLFFASRLLFNRFSSNFLVRFLGVWEQTATSGLSYYLSPPASFQDALIDPIHTLVYVFFTMFACALFSKLWIEVSGASPRDVAKQLKSQQLVMAGHREGSMYKELKRIIPTAAWLSGAVVGALAVASDLLGALGSGTAVLLCTTTIYGYYEQLQKEIKGDQYGLPVTPMMQ</sequence>
<feature type="chain" id="PRO_0000131787" description="Protein transport protein sec61 subunit alpha">
    <location>
        <begin position="1"/>
        <end position="479"/>
    </location>
</feature>
<feature type="topological domain" description="Cytoplasmic" evidence="2">
    <location>
        <begin position="1"/>
        <end position="34"/>
    </location>
</feature>
<feature type="transmembrane region" description="Helical" evidence="2">
    <location>
        <begin position="35"/>
        <end position="55"/>
    </location>
</feature>
<feature type="topological domain" description="Lumenal" evidence="2">
    <location>
        <begin position="56"/>
        <end position="76"/>
    </location>
</feature>
<feature type="transmembrane region" description="Helical" evidence="2">
    <location>
        <begin position="77"/>
        <end position="97"/>
    </location>
</feature>
<feature type="topological domain" description="Cytoplasmic" evidence="2">
    <location>
        <begin position="98"/>
        <end position="119"/>
    </location>
</feature>
<feature type="transmembrane region" description="Helical" evidence="2">
    <location>
        <begin position="120"/>
        <end position="140"/>
    </location>
</feature>
<feature type="topological domain" description="Lumenal" evidence="2">
    <location>
        <begin position="141"/>
        <end position="146"/>
    </location>
</feature>
<feature type="transmembrane region" description="Helical" evidence="2">
    <location>
        <begin position="147"/>
        <end position="167"/>
    </location>
</feature>
<feature type="topological domain" description="Cytoplasmic" evidence="2">
    <location>
        <begin position="168"/>
        <end position="245"/>
    </location>
</feature>
<feature type="transmembrane region" description="Helical" evidence="2">
    <location>
        <begin position="246"/>
        <end position="266"/>
    </location>
</feature>
<feature type="topological domain" description="Lumenal" evidence="2">
    <location>
        <begin position="267"/>
        <end position="354"/>
    </location>
</feature>
<feature type="transmembrane region" description="Helical" evidence="2">
    <location>
        <begin position="355"/>
        <end position="375"/>
    </location>
</feature>
<feature type="topological domain" description="Cytoplasmic" evidence="2">
    <location>
        <begin position="376"/>
        <end position="415"/>
    </location>
</feature>
<feature type="transmembrane region" description="Helical" evidence="2">
    <location>
        <begin position="416"/>
        <end position="434"/>
    </location>
</feature>
<feature type="topological domain" description="Lumenal" evidence="2">
    <location>
        <begin position="435"/>
        <end position="440"/>
    </location>
</feature>
<feature type="transmembrane region" description="Helical" evidence="2">
    <location>
        <begin position="441"/>
        <end position="458"/>
    </location>
</feature>
<feature type="topological domain" description="Cytoplasmic" evidence="2">
    <location>
        <begin position="459"/>
        <end position="479"/>
    </location>
</feature>
<dbReference type="EMBL" id="Y11376">
    <property type="protein sequence ID" value="CAA72200.1"/>
    <property type="molecule type" value="mRNA"/>
</dbReference>
<dbReference type="EMBL" id="Y11375">
    <property type="protein sequence ID" value="CAA72199.1"/>
    <property type="molecule type" value="Genomic_DNA"/>
</dbReference>
<dbReference type="EMBL" id="CU329671">
    <property type="protein sequence ID" value="CAA17802.1"/>
    <property type="molecule type" value="Genomic_DNA"/>
</dbReference>
<dbReference type="EMBL" id="AB027782">
    <property type="protein sequence ID" value="BAA87086.1"/>
    <property type="molecule type" value="Genomic_DNA"/>
</dbReference>
<dbReference type="PIR" id="T40282">
    <property type="entry name" value="T40282"/>
</dbReference>
<dbReference type="RefSeq" id="NP_595226.1">
    <property type="nucleotide sequence ID" value="NM_001021132.2"/>
</dbReference>
<dbReference type="SMR" id="P79088"/>
<dbReference type="BioGRID" id="277552">
    <property type="interactions" value="3"/>
</dbReference>
<dbReference type="FunCoup" id="P79088">
    <property type="interactions" value="596"/>
</dbReference>
<dbReference type="STRING" id="284812.P79088"/>
<dbReference type="iPTMnet" id="P79088"/>
<dbReference type="SwissPalm" id="P79088"/>
<dbReference type="PaxDb" id="4896-SPBC354.02c.1"/>
<dbReference type="EnsemblFungi" id="SPBC354.02c.1">
    <property type="protein sequence ID" value="SPBC354.02c.1:pep"/>
    <property type="gene ID" value="SPBC354.02c"/>
</dbReference>
<dbReference type="GeneID" id="2541037"/>
<dbReference type="KEGG" id="spo:2541037"/>
<dbReference type="PomBase" id="SPBC354.02c">
    <property type="gene designation" value="sec61"/>
</dbReference>
<dbReference type="VEuPathDB" id="FungiDB:SPBC354.02c"/>
<dbReference type="eggNOG" id="KOG1373">
    <property type="taxonomic scope" value="Eukaryota"/>
</dbReference>
<dbReference type="HOGENOM" id="CLU_031763_2_1_1"/>
<dbReference type="InParanoid" id="P79088"/>
<dbReference type="OMA" id="PMMRQMF"/>
<dbReference type="PhylomeDB" id="P79088"/>
<dbReference type="PRO" id="PR:P79088"/>
<dbReference type="Proteomes" id="UP000002485">
    <property type="component" value="Chromosome II"/>
</dbReference>
<dbReference type="GO" id="GO:0005783">
    <property type="term" value="C:endoplasmic reticulum"/>
    <property type="evidence" value="ECO:0000314"/>
    <property type="project" value="PomBase"/>
</dbReference>
<dbReference type="GO" id="GO:0000324">
    <property type="term" value="C:fungal-type vacuole"/>
    <property type="evidence" value="ECO:0000314"/>
    <property type="project" value="PomBase"/>
</dbReference>
<dbReference type="GO" id="GO:0005784">
    <property type="term" value="C:Sec61 translocon complex"/>
    <property type="evidence" value="ECO:0000318"/>
    <property type="project" value="GO_Central"/>
</dbReference>
<dbReference type="GO" id="GO:0008320">
    <property type="term" value="F:protein transmembrane transporter activity"/>
    <property type="evidence" value="ECO:0000318"/>
    <property type="project" value="GO_Central"/>
</dbReference>
<dbReference type="GO" id="GO:0043022">
    <property type="term" value="F:ribosome binding"/>
    <property type="evidence" value="ECO:0000318"/>
    <property type="project" value="GO_Central"/>
</dbReference>
<dbReference type="GO" id="GO:0005048">
    <property type="term" value="F:signal sequence binding"/>
    <property type="evidence" value="ECO:0000318"/>
    <property type="project" value="GO_Central"/>
</dbReference>
<dbReference type="GO" id="GO:0031204">
    <property type="term" value="P:post-translational protein targeting to membrane, translocation"/>
    <property type="evidence" value="ECO:0000318"/>
    <property type="project" value="GO_Central"/>
</dbReference>
<dbReference type="GO" id="GO:0045048">
    <property type="term" value="P:protein insertion into ER membrane"/>
    <property type="evidence" value="ECO:0000305"/>
    <property type="project" value="PomBase"/>
</dbReference>
<dbReference type="GO" id="GO:0006616">
    <property type="term" value="P:SRP-dependent cotranslational protein targeting to membrane, translocation"/>
    <property type="evidence" value="ECO:0000318"/>
    <property type="project" value="GO_Central"/>
</dbReference>
<dbReference type="FunFam" id="1.10.3370.10:FF:000009">
    <property type="entry name" value="Pretranslocation protein, alpha subunit, putative"/>
    <property type="match status" value="1"/>
</dbReference>
<dbReference type="Gene3D" id="1.10.3370.10">
    <property type="entry name" value="SecY subunit domain"/>
    <property type="match status" value="1"/>
</dbReference>
<dbReference type="InterPro" id="IPR002208">
    <property type="entry name" value="SecY/SEC61-alpha"/>
</dbReference>
<dbReference type="InterPro" id="IPR030659">
    <property type="entry name" value="SecY_CS"/>
</dbReference>
<dbReference type="InterPro" id="IPR023201">
    <property type="entry name" value="SecY_dom_sf"/>
</dbReference>
<dbReference type="InterPro" id="IPR019561">
    <property type="entry name" value="Translocon_Sec61/SecY_plug_dom"/>
</dbReference>
<dbReference type="NCBIfam" id="TIGR00967">
    <property type="entry name" value="3a0501s007"/>
    <property type="match status" value="1"/>
</dbReference>
<dbReference type="NCBIfam" id="NF006341">
    <property type="entry name" value="PRK08568.1-5"/>
    <property type="match status" value="1"/>
</dbReference>
<dbReference type="PANTHER" id="PTHR10906">
    <property type="entry name" value="SECY/SEC61-ALPHA FAMILY MEMBER"/>
    <property type="match status" value="1"/>
</dbReference>
<dbReference type="Pfam" id="PF10559">
    <property type="entry name" value="Plug_translocon"/>
    <property type="match status" value="1"/>
</dbReference>
<dbReference type="Pfam" id="PF00344">
    <property type="entry name" value="SecY"/>
    <property type="match status" value="1"/>
</dbReference>
<dbReference type="PIRSF" id="PIRSF004557">
    <property type="entry name" value="SecY"/>
    <property type="match status" value="1"/>
</dbReference>
<dbReference type="SUPFAM" id="SSF103491">
    <property type="entry name" value="Preprotein translocase SecY subunit"/>
    <property type="match status" value="1"/>
</dbReference>
<dbReference type="PROSITE" id="PS00755">
    <property type="entry name" value="SECY_1"/>
    <property type="match status" value="1"/>
</dbReference>
<dbReference type="PROSITE" id="PS00756">
    <property type="entry name" value="SECY_2"/>
    <property type="match status" value="1"/>
</dbReference>
<proteinExistence type="evidence at transcript level"/>
<accession>P79088</accession>
<accession>Q9UU67</accession>
<organism>
    <name type="scientific">Schizosaccharomyces pombe (strain 972 / ATCC 24843)</name>
    <name type="common">Fission yeast</name>
    <dbReference type="NCBI Taxonomy" id="284812"/>
    <lineage>
        <taxon>Eukaryota</taxon>
        <taxon>Fungi</taxon>
        <taxon>Dikarya</taxon>
        <taxon>Ascomycota</taxon>
        <taxon>Taphrinomycotina</taxon>
        <taxon>Schizosaccharomycetes</taxon>
        <taxon>Schizosaccharomycetales</taxon>
        <taxon>Schizosaccharomycetaceae</taxon>
        <taxon>Schizosaccharomyces</taxon>
    </lineage>
</organism>
<protein>
    <recommendedName>
        <fullName>Protein transport protein sec61 subunit alpha</fullName>
    </recommendedName>
</protein>
<evidence type="ECO:0000250" key="1"/>
<evidence type="ECO:0000255" key="2"/>
<evidence type="ECO:0000269" key="3">
    <source>
    </source>
</evidence>
<evidence type="ECO:0000305" key="4"/>
<keyword id="KW-0256">Endoplasmic reticulum</keyword>
<keyword id="KW-0472">Membrane</keyword>
<keyword id="KW-0653">Protein transport</keyword>
<keyword id="KW-1185">Reference proteome</keyword>
<keyword id="KW-0811">Translocation</keyword>
<keyword id="KW-0812">Transmembrane</keyword>
<keyword id="KW-1133">Transmembrane helix</keyword>
<keyword id="KW-0813">Transport</keyword>
<name>SC61A_SCHPO</name>